<sequence length="124" mass="13864">MPTVKQLIRNARQPIRNARKTAALKGCPQRRGTCARVYTINPKKPNSALRKVARVRLTSGFEITAYIPGIGHNLQEHSVVLVRGGRVKDLPGVRYRIIRGTLDAVAVKNRQQGRSKYGVKKPKK</sequence>
<accession>A1E9Y6</accession>
<gene>
    <name type="primary">rps12-A</name>
</gene>
<gene>
    <name type="primary">rps12-B</name>
</gene>
<proteinExistence type="inferred from homology"/>
<organism>
    <name type="scientific">Agrostis stolonifera</name>
    <name type="common">Creeping bentgrass</name>
    <dbReference type="NCBI Taxonomy" id="63632"/>
    <lineage>
        <taxon>Eukaryota</taxon>
        <taxon>Viridiplantae</taxon>
        <taxon>Streptophyta</taxon>
        <taxon>Embryophyta</taxon>
        <taxon>Tracheophyta</taxon>
        <taxon>Spermatophyta</taxon>
        <taxon>Magnoliopsida</taxon>
        <taxon>Liliopsida</taxon>
        <taxon>Poales</taxon>
        <taxon>Poaceae</taxon>
        <taxon>BOP clade</taxon>
        <taxon>Pooideae</taxon>
        <taxon>Poodae</taxon>
        <taxon>Poeae</taxon>
        <taxon>Poeae Chloroplast Group 1 (Aveneae type)</taxon>
        <taxon>Agrostidodinae</taxon>
        <taxon>Agrostidinae</taxon>
        <taxon>Agrostis</taxon>
    </lineage>
</organism>
<geneLocation type="chloroplast"/>
<name>RR12_AGRST</name>
<protein>
    <recommendedName>
        <fullName evidence="2">Small ribosomal subunit protein uS12cz/uS12cy</fullName>
    </recommendedName>
    <alternativeName>
        <fullName evidence="3">30S ribosomal protein S12, chloroplastic</fullName>
    </alternativeName>
</protein>
<evidence type="ECO:0000250" key="1"/>
<evidence type="ECO:0000255" key="2">
    <source>
        <dbReference type="HAMAP-Rule" id="MF_00403"/>
    </source>
</evidence>
<evidence type="ECO:0000305" key="3"/>
<reference key="1">
    <citation type="journal article" date="2007" name="Theor. Appl. Genet.">
        <title>Complete chloroplast genome sequences of Hordeum vulgare, Sorghum bicolor and Agrostis stolonifera, and comparative analyses with other grass genomes.</title>
        <authorList>
            <person name="Saski C."/>
            <person name="Lee S.-B."/>
            <person name="Fjellheim S."/>
            <person name="Guda C."/>
            <person name="Jansen R.K."/>
            <person name="Luo H."/>
            <person name="Tomkins J."/>
            <person name="Rognli O.A."/>
            <person name="Daniell H."/>
            <person name="Clarke J.L."/>
        </authorList>
    </citation>
    <scope>NUCLEOTIDE SEQUENCE [LARGE SCALE GENOMIC DNA]</scope>
    <source>
        <strain>cv. Penn A-4</strain>
    </source>
</reference>
<dbReference type="EMBL" id="EF115543">
    <property type="protein sequence ID" value="ABK79625.1"/>
    <property type="molecule type" value="Genomic_DNA"/>
</dbReference>
<dbReference type="EMBL" id="EF115543">
    <property type="protein sequence ID" value="ABK79639.1"/>
    <property type="molecule type" value="Genomic_DNA"/>
</dbReference>
<dbReference type="SMR" id="A1E9Y6"/>
<dbReference type="GO" id="GO:0009507">
    <property type="term" value="C:chloroplast"/>
    <property type="evidence" value="ECO:0007669"/>
    <property type="project" value="UniProtKB-SubCell"/>
</dbReference>
<dbReference type="GO" id="GO:0015935">
    <property type="term" value="C:small ribosomal subunit"/>
    <property type="evidence" value="ECO:0007669"/>
    <property type="project" value="InterPro"/>
</dbReference>
<dbReference type="GO" id="GO:0019843">
    <property type="term" value="F:rRNA binding"/>
    <property type="evidence" value="ECO:0007669"/>
    <property type="project" value="UniProtKB-UniRule"/>
</dbReference>
<dbReference type="GO" id="GO:0003735">
    <property type="term" value="F:structural constituent of ribosome"/>
    <property type="evidence" value="ECO:0007669"/>
    <property type="project" value="InterPro"/>
</dbReference>
<dbReference type="GO" id="GO:0006412">
    <property type="term" value="P:translation"/>
    <property type="evidence" value="ECO:0007669"/>
    <property type="project" value="UniProtKB-UniRule"/>
</dbReference>
<dbReference type="CDD" id="cd03368">
    <property type="entry name" value="Ribosomal_S12"/>
    <property type="match status" value="1"/>
</dbReference>
<dbReference type="FunFam" id="2.40.50.140:FF:000008">
    <property type="entry name" value="30S ribosomal protein S12, chloroplastic"/>
    <property type="match status" value="1"/>
</dbReference>
<dbReference type="Gene3D" id="2.40.50.140">
    <property type="entry name" value="Nucleic acid-binding proteins"/>
    <property type="match status" value="1"/>
</dbReference>
<dbReference type="HAMAP" id="MF_00403_B">
    <property type="entry name" value="Ribosomal_uS12_B"/>
    <property type="match status" value="1"/>
</dbReference>
<dbReference type="InterPro" id="IPR012340">
    <property type="entry name" value="NA-bd_OB-fold"/>
</dbReference>
<dbReference type="InterPro" id="IPR006032">
    <property type="entry name" value="Ribosomal_uS12"/>
</dbReference>
<dbReference type="InterPro" id="IPR005679">
    <property type="entry name" value="Ribosomal_uS12_bac"/>
</dbReference>
<dbReference type="NCBIfam" id="TIGR00981">
    <property type="entry name" value="rpsL_bact"/>
    <property type="match status" value="1"/>
</dbReference>
<dbReference type="PANTHER" id="PTHR11652">
    <property type="entry name" value="30S RIBOSOMAL PROTEIN S12 FAMILY MEMBER"/>
    <property type="match status" value="1"/>
</dbReference>
<dbReference type="Pfam" id="PF00164">
    <property type="entry name" value="Ribosom_S12_S23"/>
    <property type="match status" value="1"/>
</dbReference>
<dbReference type="PIRSF" id="PIRSF002133">
    <property type="entry name" value="Ribosomal_S12/S23"/>
    <property type="match status" value="1"/>
</dbReference>
<dbReference type="PRINTS" id="PR01034">
    <property type="entry name" value="RIBOSOMALS12"/>
</dbReference>
<dbReference type="SUPFAM" id="SSF50249">
    <property type="entry name" value="Nucleic acid-binding proteins"/>
    <property type="match status" value="1"/>
</dbReference>
<dbReference type="PROSITE" id="PS00055">
    <property type="entry name" value="RIBOSOMAL_S12"/>
    <property type="match status" value="1"/>
</dbReference>
<feature type="chain" id="PRO_0000275155" description="Small ribosomal subunit protein uS12cz/uS12cy">
    <location>
        <begin position="1"/>
        <end position="124"/>
    </location>
</feature>
<keyword id="KW-0150">Chloroplast</keyword>
<keyword id="KW-0934">Plastid</keyword>
<keyword id="KW-0687">Ribonucleoprotein</keyword>
<keyword id="KW-0689">Ribosomal protein</keyword>
<keyword id="KW-0694">RNA-binding</keyword>
<keyword id="KW-0699">rRNA-binding</keyword>
<comment type="function">
    <text evidence="1">With S4 and S5 plays an important role in translational accuracy. Located at the interface of the 30S and 50S subunits (By similarity).</text>
</comment>
<comment type="subunit">
    <text evidence="1">Part of the 30S ribosomal subunit.</text>
</comment>
<comment type="subcellular location">
    <subcellularLocation>
        <location>Plastid</location>
        <location>Chloroplast</location>
    </subcellularLocation>
</comment>
<comment type="similarity">
    <text evidence="3">Belongs to the universal ribosomal protein uS12 family.</text>
</comment>